<protein>
    <recommendedName>
        <fullName evidence="1">Pyridoxine/pyridoxamine 5'-phosphate oxidase</fullName>
        <ecNumber evidence="1">1.4.3.5</ecNumber>
    </recommendedName>
    <alternativeName>
        <fullName evidence="1">PNP/PMP oxidase</fullName>
        <shortName evidence="1">PNPOx</shortName>
    </alternativeName>
    <alternativeName>
        <fullName evidence="1">Pyridoxal 5'-phosphate synthase</fullName>
    </alternativeName>
</protein>
<comment type="function">
    <text evidence="1">Catalyzes the oxidation of either pyridoxine 5'-phosphate (PNP) or pyridoxamine 5'-phosphate (PMP) into pyridoxal 5'-phosphate (PLP).</text>
</comment>
<comment type="catalytic activity">
    <reaction evidence="1">
        <text>pyridoxamine 5'-phosphate + O2 + H2O = pyridoxal 5'-phosphate + H2O2 + NH4(+)</text>
        <dbReference type="Rhea" id="RHEA:15817"/>
        <dbReference type="ChEBI" id="CHEBI:15377"/>
        <dbReference type="ChEBI" id="CHEBI:15379"/>
        <dbReference type="ChEBI" id="CHEBI:16240"/>
        <dbReference type="ChEBI" id="CHEBI:28938"/>
        <dbReference type="ChEBI" id="CHEBI:58451"/>
        <dbReference type="ChEBI" id="CHEBI:597326"/>
        <dbReference type="EC" id="1.4.3.5"/>
    </reaction>
</comment>
<comment type="catalytic activity">
    <reaction evidence="1">
        <text>pyridoxine 5'-phosphate + O2 = pyridoxal 5'-phosphate + H2O2</text>
        <dbReference type="Rhea" id="RHEA:15149"/>
        <dbReference type="ChEBI" id="CHEBI:15379"/>
        <dbReference type="ChEBI" id="CHEBI:16240"/>
        <dbReference type="ChEBI" id="CHEBI:58589"/>
        <dbReference type="ChEBI" id="CHEBI:597326"/>
        <dbReference type="EC" id="1.4.3.5"/>
    </reaction>
</comment>
<comment type="cofactor">
    <cofactor evidence="1">
        <name>FMN</name>
        <dbReference type="ChEBI" id="CHEBI:58210"/>
    </cofactor>
    <text evidence="1">Binds 1 FMN per subunit.</text>
</comment>
<comment type="pathway">
    <text evidence="1">Cofactor metabolism; pyridoxal 5'-phosphate salvage; pyridoxal 5'-phosphate from pyridoxamine 5'-phosphate: step 1/1.</text>
</comment>
<comment type="pathway">
    <text evidence="1">Cofactor metabolism; pyridoxal 5'-phosphate salvage; pyridoxal 5'-phosphate from pyridoxine 5'-phosphate: step 1/1.</text>
</comment>
<comment type="subunit">
    <text evidence="1">Homodimer.</text>
</comment>
<comment type="similarity">
    <text evidence="1">Belongs to the pyridoxamine 5'-phosphate oxidase family.</text>
</comment>
<organism>
    <name type="scientific">Burkholderia mallei (strain ATCC 23344)</name>
    <dbReference type="NCBI Taxonomy" id="243160"/>
    <lineage>
        <taxon>Bacteria</taxon>
        <taxon>Pseudomonadati</taxon>
        <taxon>Pseudomonadota</taxon>
        <taxon>Betaproteobacteria</taxon>
        <taxon>Burkholderiales</taxon>
        <taxon>Burkholderiaceae</taxon>
        <taxon>Burkholderia</taxon>
        <taxon>pseudomallei group</taxon>
    </lineage>
</organism>
<proteinExistence type="inferred from homology"/>
<gene>
    <name evidence="1" type="primary">pdxH</name>
    <name type="ordered locus">BMA0359</name>
</gene>
<name>PDXH_BURMA</name>
<reference key="1">
    <citation type="journal article" date="2004" name="Proc. Natl. Acad. Sci. U.S.A.">
        <title>Structural flexibility in the Burkholderia mallei genome.</title>
        <authorList>
            <person name="Nierman W.C."/>
            <person name="DeShazer D."/>
            <person name="Kim H.S."/>
            <person name="Tettelin H."/>
            <person name="Nelson K.E."/>
            <person name="Feldblyum T.V."/>
            <person name="Ulrich R.L."/>
            <person name="Ronning C.M."/>
            <person name="Brinkac L.M."/>
            <person name="Daugherty S.C."/>
            <person name="Davidsen T.D."/>
            <person name="DeBoy R.T."/>
            <person name="Dimitrov G."/>
            <person name="Dodson R.J."/>
            <person name="Durkin A.S."/>
            <person name="Gwinn M.L."/>
            <person name="Haft D.H."/>
            <person name="Khouri H.M."/>
            <person name="Kolonay J.F."/>
            <person name="Madupu R."/>
            <person name="Mohammoud Y."/>
            <person name="Nelson W.C."/>
            <person name="Radune D."/>
            <person name="Romero C.M."/>
            <person name="Sarria S."/>
            <person name="Selengut J."/>
            <person name="Shamblin C."/>
            <person name="Sullivan S.A."/>
            <person name="White O."/>
            <person name="Yu Y."/>
            <person name="Zafar N."/>
            <person name="Zhou L."/>
            <person name="Fraser C.M."/>
        </authorList>
    </citation>
    <scope>NUCLEOTIDE SEQUENCE [LARGE SCALE GENOMIC DNA]</scope>
    <source>
        <strain>ATCC 23344</strain>
    </source>
</reference>
<dbReference type="EC" id="1.4.3.5" evidence="1"/>
<dbReference type="EMBL" id="CP000010">
    <property type="protein sequence ID" value="AAU50315.1"/>
    <property type="molecule type" value="Genomic_DNA"/>
</dbReference>
<dbReference type="RefSeq" id="WP_004188935.1">
    <property type="nucleotide sequence ID" value="NC_006348.1"/>
</dbReference>
<dbReference type="RefSeq" id="YP_102177.1">
    <property type="nucleotide sequence ID" value="NC_006348.1"/>
</dbReference>
<dbReference type="SMR" id="Q62M91"/>
<dbReference type="GeneID" id="92978130"/>
<dbReference type="KEGG" id="bma:BMA0359"/>
<dbReference type="PATRIC" id="fig|243160.12.peg.362"/>
<dbReference type="eggNOG" id="COG0259">
    <property type="taxonomic scope" value="Bacteria"/>
</dbReference>
<dbReference type="HOGENOM" id="CLU_032263_2_2_4"/>
<dbReference type="UniPathway" id="UPA01068">
    <property type="reaction ID" value="UER00304"/>
</dbReference>
<dbReference type="UniPathway" id="UPA01068">
    <property type="reaction ID" value="UER00305"/>
</dbReference>
<dbReference type="Proteomes" id="UP000006693">
    <property type="component" value="Chromosome 1"/>
</dbReference>
<dbReference type="GO" id="GO:0010181">
    <property type="term" value="F:FMN binding"/>
    <property type="evidence" value="ECO:0007669"/>
    <property type="project" value="UniProtKB-UniRule"/>
</dbReference>
<dbReference type="GO" id="GO:0004733">
    <property type="term" value="F:pyridoxamine phosphate oxidase activity"/>
    <property type="evidence" value="ECO:0007669"/>
    <property type="project" value="UniProtKB-UniRule"/>
</dbReference>
<dbReference type="GO" id="GO:0008615">
    <property type="term" value="P:pyridoxine biosynthetic process"/>
    <property type="evidence" value="ECO:0007669"/>
    <property type="project" value="UniProtKB-KW"/>
</dbReference>
<dbReference type="FunFam" id="2.30.110.10:FF:000005">
    <property type="entry name" value="NAD(P)H-hydrate epimerase"/>
    <property type="match status" value="1"/>
</dbReference>
<dbReference type="Gene3D" id="2.30.110.10">
    <property type="entry name" value="Electron Transport, Fmn-binding Protein, Chain A"/>
    <property type="match status" value="1"/>
</dbReference>
<dbReference type="HAMAP" id="MF_01629">
    <property type="entry name" value="PdxH"/>
    <property type="match status" value="1"/>
</dbReference>
<dbReference type="InterPro" id="IPR000659">
    <property type="entry name" value="Pyridox_Oxase"/>
</dbReference>
<dbReference type="InterPro" id="IPR019740">
    <property type="entry name" value="Pyridox_Oxase_CS"/>
</dbReference>
<dbReference type="InterPro" id="IPR011576">
    <property type="entry name" value="Pyridox_Oxase_N"/>
</dbReference>
<dbReference type="InterPro" id="IPR019576">
    <property type="entry name" value="Pyridoxamine_oxidase_dimer_C"/>
</dbReference>
<dbReference type="InterPro" id="IPR012349">
    <property type="entry name" value="Split_barrel_FMN-bd"/>
</dbReference>
<dbReference type="NCBIfam" id="TIGR00558">
    <property type="entry name" value="pdxH"/>
    <property type="match status" value="1"/>
</dbReference>
<dbReference type="NCBIfam" id="NF004231">
    <property type="entry name" value="PRK05679.1"/>
    <property type="match status" value="1"/>
</dbReference>
<dbReference type="PANTHER" id="PTHR10851:SF0">
    <property type="entry name" value="PYRIDOXINE-5'-PHOSPHATE OXIDASE"/>
    <property type="match status" value="1"/>
</dbReference>
<dbReference type="PANTHER" id="PTHR10851">
    <property type="entry name" value="PYRIDOXINE-5-PHOSPHATE OXIDASE"/>
    <property type="match status" value="1"/>
</dbReference>
<dbReference type="Pfam" id="PF10590">
    <property type="entry name" value="PNP_phzG_C"/>
    <property type="match status" value="1"/>
</dbReference>
<dbReference type="Pfam" id="PF01243">
    <property type="entry name" value="PNPOx_N"/>
    <property type="match status" value="1"/>
</dbReference>
<dbReference type="PIRSF" id="PIRSF000190">
    <property type="entry name" value="Pyd_amn-ph_oxd"/>
    <property type="match status" value="1"/>
</dbReference>
<dbReference type="SUPFAM" id="SSF50475">
    <property type="entry name" value="FMN-binding split barrel"/>
    <property type="match status" value="1"/>
</dbReference>
<dbReference type="PROSITE" id="PS01064">
    <property type="entry name" value="PYRIDOX_OXIDASE"/>
    <property type="match status" value="1"/>
</dbReference>
<feature type="chain" id="PRO_0000167695" description="Pyridoxine/pyridoxamine 5'-phosphate oxidase">
    <location>
        <begin position="1"/>
        <end position="214"/>
    </location>
</feature>
<feature type="binding site" evidence="1">
    <location>
        <begin position="8"/>
        <end position="11"/>
    </location>
    <ligand>
        <name>substrate</name>
    </ligand>
</feature>
<feature type="binding site" evidence="1">
    <location>
        <begin position="61"/>
        <end position="66"/>
    </location>
    <ligand>
        <name>FMN</name>
        <dbReference type="ChEBI" id="CHEBI:58210"/>
    </ligand>
</feature>
<feature type="binding site" evidence="1">
    <location>
        <position position="66"/>
    </location>
    <ligand>
        <name>substrate</name>
    </ligand>
</feature>
<feature type="binding site" evidence="1">
    <location>
        <begin position="76"/>
        <end position="77"/>
    </location>
    <ligand>
        <name>FMN</name>
        <dbReference type="ChEBI" id="CHEBI:58210"/>
    </ligand>
</feature>
<feature type="binding site" evidence="1">
    <location>
        <position position="82"/>
    </location>
    <ligand>
        <name>FMN</name>
        <dbReference type="ChEBI" id="CHEBI:58210"/>
    </ligand>
</feature>
<feature type="binding site" evidence="1">
    <location>
        <position position="83"/>
    </location>
    <ligand>
        <name>FMN</name>
        <dbReference type="ChEBI" id="CHEBI:58210"/>
    </ligand>
</feature>
<feature type="binding site" evidence="1">
    <location>
        <position position="105"/>
    </location>
    <ligand>
        <name>FMN</name>
        <dbReference type="ChEBI" id="CHEBI:58210"/>
    </ligand>
</feature>
<feature type="binding site" evidence="1">
    <location>
        <position position="123"/>
    </location>
    <ligand>
        <name>substrate</name>
    </ligand>
</feature>
<feature type="binding site" evidence="1">
    <location>
        <position position="127"/>
    </location>
    <ligand>
        <name>substrate</name>
    </ligand>
</feature>
<feature type="binding site" evidence="1">
    <location>
        <position position="131"/>
    </location>
    <ligand>
        <name>substrate</name>
    </ligand>
</feature>
<feature type="binding site" evidence="1">
    <location>
        <begin position="140"/>
        <end position="141"/>
    </location>
    <ligand>
        <name>FMN</name>
        <dbReference type="ChEBI" id="CHEBI:58210"/>
    </ligand>
</feature>
<feature type="binding site" evidence="1">
    <location>
        <position position="184"/>
    </location>
    <ligand>
        <name>FMN</name>
        <dbReference type="ChEBI" id="CHEBI:58210"/>
    </ligand>
</feature>
<feature type="binding site" evidence="1">
    <location>
        <begin position="190"/>
        <end position="192"/>
    </location>
    <ligand>
        <name>substrate</name>
    </ligand>
</feature>
<feature type="binding site" evidence="1">
    <location>
        <position position="194"/>
    </location>
    <ligand>
        <name>FMN</name>
        <dbReference type="ChEBI" id="CHEBI:58210"/>
    </ligand>
</feature>
<evidence type="ECO:0000255" key="1">
    <source>
        <dbReference type="HAMAP-Rule" id="MF_01629"/>
    </source>
</evidence>
<keyword id="KW-0285">Flavoprotein</keyword>
<keyword id="KW-0288">FMN</keyword>
<keyword id="KW-0560">Oxidoreductase</keyword>
<keyword id="KW-0664">Pyridoxine biosynthesis</keyword>
<keyword id="KW-1185">Reference proteome</keyword>
<accession>Q62M91</accession>
<sequence>MTTLADLRTNYSRASLDAADVNPNPFVQFDVWFKEALDAQLPEPNTMTLATVDESGRPSARIVLIKGADERGFVFFTNYESRKGRELAHNPNAALLFYWIELERQVRVEGRIEKTSEEESDRYFASRPLGSRIGAWASEQSAVIESRALLEAREKEIGARFGENPPRPPHWGGYRLVPSSIEFWQGRPSRLHDRLLYTRDAASASGWKITRLAP</sequence>